<keyword id="KW-0066">ATP synthesis</keyword>
<keyword id="KW-1003">Cell membrane</keyword>
<keyword id="KW-0139">CF(1)</keyword>
<keyword id="KW-0375">Hydrogen ion transport</keyword>
<keyword id="KW-0406">Ion transport</keyword>
<keyword id="KW-0472">Membrane</keyword>
<keyword id="KW-1185">Reference proteome</keyword>
<keyword id="KW-0813">Transport</keyword>
<gene>
    <name evidence="1" type="primary">atpG</name>
    <name type="ordered locus">spr1361</name>
</gene>
<sequence length="292" mass="32325">MAVSLNDIKTKIASTKNTSQITNAMQMVSAAKLGRSEEAARNFQVYAQKVRKLLTDILHGNGAGASTNPMLISRSVKKTGYIVITSDRGLVGGYNSSILKAVMELKEEYHPDGKGFEMICIGGMGADFFKARGIQPLYELRGLSDQPSFDQVRKIISKTVEMYQNELFDELYVCYNHHVNTLTSQMRVEQMLPIVDLDPNEADEEYSLTFELETSREEILEQLLPQFAESMIYGAIIDAKTAENAAGMTAMQTATDNAKKVINDLTIQYNRARQAAITQEITEIVAGASALE</sequence>
<protein>
    <recommendedName>
        <fullName evidence="1">ATP synthase gamma chain</fullName>
    </recommendedName>
    <alternativeName>
        <fullName evidence="1">ATP synthase F1 sector gamma subunit</fullName>
    </alternativeName>
    <alternativeName>
        <fullName evidence="1">F-ATPase gamma subunit</fullName>
    </alternativeName>
</protein>
<accession>Q7CRB2</accession>
<name>ATPG_STRR6</name>
<feature type="chain" id="PRO_0000073388" description="ATP synthase gamma chain">
    <location>
        <begin position="1"/>
        <end position="292"/>
    </location>
</feature>
<proteinExistence type="evidence at protein level"/>
<dbReference type="EMBL" id="AF368465">
    <property type="protein sequence ID" value="AAL66418.1"/>
    <property type="molecule type" value="Genomic_DNA"/>
</dbReference>
<dbReference type="EMBL" id="AE007317">
    <property type="protein sequence ID" value="AAL00165.1"/>
    <property type="molecule type" value="Genomic_DNA"/>
</dbReference>
<dbReference type="RefSeq" id="NP_358954.1">
    <property type="nucleotide sequence ID" value="NC_003098.1"/>
</dbReference>
<dbReference type="RefSeq" id="WP_000301212.1">
    <property type="nucleotide sequence ID" value="NC_003098.1"/>
</dbReference>
<dbReference type="SMR" id="Q7CRB2"/>
<dbReference type="STRING" id="171101.spr1361"/>
<dbReference type="KEGG" id="spr:spr1361"/>
<dbReference type="PATRIC" id="fig|171101.6.peg.1475"/>
<dbReference type="eggNOG" id="COG0224">
    <property type="taxonomic scope" value="Bacteria"/>
</dbReference>
<dbReference type="HOGENOM" id="CLU_050669_0_1_9"/>
<dbReference type="Proteomes" id="UP000000586">
    <property type="component" value="Chromosome"/>
</dbReference>
<dbReference type="GO" id="GO:0005886">
    <property type="term" value="C:plasma membrane"/>
    <property type="evidence" value="ECO:0007669"/>
    <property type="project" value="UniProtKB-SubCell"/>
</dbReference>
<dbReference type="GO" id="GO:0045259">
    <property type="term" value="C:proton-transporting ATP synthase complex"/>
    <property type="evidence" value="ECO:0007669"/>
    <property type="project" value="UniProtKB-KW"/>
</dbReference>
<dbReference type="GO" id="GO:0005524">
    <property type="term" value="F:ATP binding"/>
    <property type="evidence" value="ECO:0007669"/>
    <property type="project" value="UniProtKB-UniRule"/>
</dbReference>
<dbReference type="GO" id="GO:0046933">
    <property type="term" value="F:proton-transporting ATP synthase activity, rotational mechanism"/>
    <property type="evidence" value="ECO:0007669"/>
    <property type="project" value="UniProtKB-UniRule"/>
</dbReference>
<dbReference type="GO" id="GO:0015986">
    <property type="term" value="P:proton motive force-driven ATP synthesis"/>
    <property type="evidence" value="ECO:0000318"/>
    <property type="project" value="GO_Central"/>
</dbReference>
<dbReference type="GO" id="GO:0042777">
    <property type="term" value="P:proton motive force-driven plasma membrane ATP synthesis"/>
    <property type="evidence" value="ECO:0007669"/>
    <property type="project" value="UniProtKB-UniRule"/>
</dbReference>
<dbReference type="CDD" id="cd12151">
    <property type="entry name" value="F1-ATPase_gamma"/>
    <property type="match status" value="1"/>
</dbReference>
<dbReference type="FunFam" id="3.40.1380.10:FF:000002">
    <property type="entry name" value="ATP synthase gamma chain"/>
    <property type="match status" value="1"/>
</dbReference>
<dbReference type="Gene3D" id="3.40.1380.10">
    <property type="match status" value="1"/>
</dbReference>
<dbReference type="Gene3D" id="1.10.287.80">
    <property type="entry name" value="ATP synthase, gamma subunit, helix hairpin domain"/>
    <property type="match status" value="1"/>
</dbReference>
<dbReference type="HAMAP" id="MF_00815">
    <property type="entry name" value="ATP_synth_gamma_bact"/>
    <property type="match status" value="1"/>
</dbReference>
<dbReference type="InterPro" id="IPR035968">
    <property type="entry name" value="ATP_synth_F1_ATPase_gsu"/>
</dbReference>
<dbReference type="InterPro" id="IPR000131">
    <property type="entry name" value="ATP_synth_F1_gsu"/>
</dbReference>
<dbReference type="InterPro" id="IPR023632">
    <property type="entry name" value="ATP_synth_F1_gsu_CS"/>
</dbReference>
<dbReference type="NCBIfam" id="TIGR01146">
    <property type="entry name" value="ATPsyn_F1gamma"/>
    <property type="match status" value="1"/>
</dbReference>
<dbReference type="NCBIfam" id="NF004147">
    <property type="entry name" value="PRK05621.2-1"/>
    <property type="match status" value="1"/>
</dbReference>
<dbReference type="PANTHER" id="PTHR11693">
    <property type="entry name" value="ATP SYNTHASE GAMMA CHAIN"/>
    <property type="match status" value="1"/>
</dbReference>
<dbReference type="PANTHER" id="PTHR11693:SF22">
    <property type="entry name" value="ATP SYNTHASE SUBUNIT GAMMA, MITOCHONDRIAL"/>
    <property type="match status" value="1"/>
</dbReference>
<dbReference type="Pfam" id="PF00231">
    <property type="entry name" value="ATP-synt"/>
    <property type="match status" value="1"/>
</dbReference>
<dbReference type="PRINTS" id="PR00126">
    <property type="entry name" value="ATPASEGAMMA"/>
</dbReference>
<dbReference type="SUPFAM" id="SSF52943">
    <property type="entry name" value="ATP synthase (F1-ATPase), gamma subunit"/>
    <property type="match status" value="1"/>
</dbReference>
<dbReference type="PROSITE" id="PS00153">
    <property type="entry name" value="ATPASE_GAMMA"/>
    <property type="match status" value="1"/>
</dbReference>
<comment type="function">
    <text>Produces ATP from ADP in the presence of a proton gradient across the membrane. The gamma chain is believed to be important in regulating ATPase activity and the flow of protons through the CF(0) complex.</text>
</comment>
<comment type="subunit">
    <text evidence="1 2">F-type ATPases have 2 components, CF(1) - the catalytic core - and CF(0) - the membrane proton channel. CF(1) has five subunits: alpha(3), beta(3), gamma(1), delta(1), epsilon(1). CF(0) has three main subunits: a, b and c.</text>
</comment>
<comment type="subcellular location">
    <subcellularLocation>
        <location evidence="3">Cell membrane</location>
        <topology evidence="3">Peripheral membrane protein</topology>
    </subcellularLocation>
</comment>
<comment type="induction">
    <text evidence="2">Induced by a decrease in external pH from 7.5 to 5.7.</text>
</comment>
<comment type="similarity">
    <text evidence="1">Belongs to the ATPase gamma chain family.</text>
</comment>
<evidence type="ECO:0000255" key="1">
    <source>
        <dbReference type="HAMAP-Rule" id="MF_00815"/>
    </source>
</evidence>
<evidence type="ECO:0000269" key="2">
    <source>
    </source>
</evidence>
<evidence type="ECO:0000305" key="3">
    <source>
    </source>
</evidence>
<reference key="1">
    <citation type="journal article" date="2001" name="Mol. Microbiol.">
        <title>The promoter of the operon encoding the F0F1 ATPase of Streptococcus pneumoniae is inducible by pH.</title>
        <authorList>
            <person name="Martin-Galiano A.J."/>
            <person name="Ferrandiz M.J."/>
            <person name="de la Campa A.G."/>
        </authorList>
    </citation>
    <scope>NUCLEOTIDE SEQUENCE [GENOMIC DNA]</scope>
    <scope>SUBUNIT</scope>
    <scope>SUBCELLULAR LOCATION</scope>
    <scope>INDUCTION</scope>
</reference>
<reference key="2">
    <citation type="journal article" date="2001" name="J. Bacteriol.">
        <title>Genome of the bacterium Streptococcus pneumoniae strain R6.</title>
        <authorList>
            <person name="Hoskins J."/>
            <person name="Alborn W.E. Jr."/>
            <person name="Arnold J."/>
            <person name="Blaszczak L.C."/>
            <person name="Burgett S."/>
            <person name="DeHoff B.S."/>
            <person name="Estrem S.T."/>
            <person name="Fritz L."/>
            <person name="Fu D.-J."/>
            <person name="Fuller W."/>
            <person name="Geringer C."/>
            <person name="Gilmour R."/>
            <person name="Glass J.S."/>
            <person name="Khoja H."/>
            <person name="Kraft A.R."/>
            <person name="Lagace R.E."/>
            <person name="LeBlanc D.J."/>
            <person name="Lee L.N."/>
            <person name="Lefkowitz E.J."/>
            <person name="Lu J."/>
            <person name="Matsushima P."/>
            <person name="McAhren S.M."/>
            <person name="McHenney M."/>
            <person name="McLeaster K."/>
            <person name="Mundy C.W."/>
            <person name="Nicas T.I."/>
            <person name="Norris F.H."/>
            <person name="O'Gara M."/>
            <person name="Peery R.B."/>
            <person name="Robertson G.T."/>
            <person name="Rockey P."/>
            <person name="Sun P.-M."/>
            <person name="Winkler M.E."/>
            <person name="Yang Y."/>
            <person name="Young-Bellido M."/>
            <person name="Zhao G."/>
            <person name="Zook C.A."/>
            <person name="Baltz R.H."/>
            <person name="Jaskunas S.R."/>
            <person name="Rosteck P.R. Jr."/>
            <person name="Skatrud P.L."/>
            <person name="Glass J.I."/>
        </authorList>
    </citation>
    <scope>NUCLEOTIDE SEQUENCE [LARGE SCALE GENOMIC DNA]</scope>
    <source>
        <strain>ATCC BAA-255 / R6</strain>
    </source>
</reference>
<organism>
    <name type="scientific">Streptococcus pneumoniae (strain ATCC BAA-255 / R6)</name>
    <dbReference type="NCBI Taxonomy" id="171101"/>
    <lineage>
        <taxon>Bacteria</taxon>
        <taxon>Bacillati</taxon>
        <taxon>Bacillota</taxon>
        <taxon>Bacilli</taxon>
        <taxon>Lactobacillales</taxon>
        <taxon>Streptococcaceae</taxon>
        <taxon>Streptococcus</taxon>
    </lineage>
</organism>